<evidence type="ECO:0000255" key="1">
    <source>
        <dbReference type="HAMAP-Rule" id="MF_00693"/>
    </source>
</evidence>
<evidence type="ECO:0000256" key="2">
    <source>
        <dbReference type="SAM" id="MobiDB-lite"/>
    </source>
</evidence>
<dbReference type="EMBL" id="AE006468">
    <property type="protein sequence ID" value="AAL20815.1"/>
    <property type="molecule type" value="Genomic_DNA"/>
</dbReference>
<dbReference type="RefSeq" id="NP_460856.1">
    <property type="nucleotide sequence ID" value="NC_003197.2"/>
</dbReference>
<dbReference type="RefSeq" id="WP_000907242.1">
    <property type="nucleotide sequence ID" value="NC_003197.2"/>
</dbReference>
<dbReference type="SMR" id="P67179"/>
<dbReference type="STRING" id="99287.STM1899"/>
<dbReference type="PaxDb" id="99287-STM1899"/>
<dbReference type="GeneID" id="1253420"/>
<dbReference type="KEGG" id="stm:STM1899"/>
<dbReference type="PATRIC" id="fig|99287.12.peg.2014"/>
<dbReference type="HOGENOM" id="CLU_062974_2_2_6"/>
<dbReference type="OMA" id="NFDIPDE"/>
<dbReference type="PhylomeDB" id="P67179"/>
<dbReference type="BioCyc" id="SENT99287:STM1899-MONOMER"/>
<dbReference type="Proteomes" id="UP000001014">
    <property type="component" value="Chromosome"/>
</dbReference>
<dbReference type="GO" id="GO:0005829">
    <property type="term" value="C:cytosol"/>
    <property type="evidence" value="ECO:0000318"/>
    <property type="project" value="GO_Central"/>
</dbReference>
<dbReference type="GO" id="GO:0003677">
    <property type="term" value="F:DNA binding"/>
    <property type="evidence" value="ECO:0007669"/>
    <property type="project" value="UniProtKB-UniRule"/>
</dbReference>
<dbReference type="GO" id="GO:0006355">
    <property type="term" value="P:regulation of DNA-templated transcription"/>
    <property type="evidence" value="ECO:0007669"/>
    <property type="project" value="UniProtKB-UniRule"/>
</dbReference>
<dbReference type="FunFam" id="1.10.10.200:FF:000001">
    <property type="entry name" value="Probable transcriptional regulatory protein YebC"/>
    <property type="match status" value="1"/>
</dbReference>
<dbReference type="FunFam" id="3.30.70.980:FF:000002">
    <property type="entry name" value="Probable transcriptional regulatory protein YebC"/>
    <property type="match status" value="1"/>
</dbReference>
<dbReference type="Gene3D" id="1.10.10.200">
    <property type="match status" value="1"/>
</dbReference>
<dbReference type="Gene3D" id="3.30.70.980">
    <property type="match status" value="2"/>
</dbReference>
<dbReference type="HAMAP" id="MF_00693">
    <property type="entry name" value="Transcrip_reg_TACO1"/>
    <property type="match status" value="1"/>
</dbReference>
<dbReference type="InterPro" id="IPR017856">
    <property type="entry name" value="Integrase-like_N"/>
</dbReference>
<dbReference type="InterPro" id="IPR048300">
    <property type="entry name" value="TACO1_YebC-like_2nd/3rd_dom"/>
</dbReference>
<dbReference type="InterPro" id="IPR049083">
    <property type="entry name" value="TACO1_YebC_N"/>
</dbReference>
<dbReference type="InterPro" id="IPR002876">
    <property type="entry name" value="Transcrip_reg_TACO1-like"/>
</dbReference>
<dbReference type="InterPro" id="IPR026564">
    <property type="entry name" value="Transcrip_reg_TACO1-like_dom3"/>
</dbReference>
<dbReference type="InterPro" id="IPR029072">
    <property type="entry name" value="YebC-like"/>
</dbReference>
<dbReference type="NCBIfam" id="NF001030">
    <property type="entry name" value="PRK00110.1"/>
    <property type="match status" value="1"/>
</dbReference>
<dbReference type="NCBIfam" id="NF009044">
    <property type="entry name" value="PRK12378.1"/>
    <property type="match status" value="1"/>
</dbReference>
<dbReference type="NCBIfam" id="TIGR01033">
    <property type="entry name" value="YebC/PmpR family DNA-binding transcriptional regulator"/>
    <property type="match status" value="1"/>
</dbReference>
<dbReference type="PANTHER" id="PTHR12532:SF6">
    <property type="entry name" value="TRANSCRIPTIONAL REGULATORY PROTEIN YEBC-RELATED"/>
    <property type="match status" value="1"/>
</dbReference>
<dbReference type="PANTHER" id="PTHR12532">
    <property type="entry name" value="TRANSLATIONAL ACTIVATOR OF CYTOCHROME C OXIDASE 1"/>
    <property type="match status" value="1"/>
</dbReference>
<dbReference type="Pfam" id="PF20772">
    <property type="entry name" value="TACO1_YebC_N"/>
    <property type="match status" value="1"/>
</dbReference>
<dbReference type="Pfam" id="PF01709">
    <property type="entry name" value="Transcrip_reg"/>
    <property type="match status" value="1"/>
</dbReference>
<dbReference type="SUPFAM" id="SSF75625">
    <property type="entry name" value="YebC-like"/>
    <property type="match status" value="1"/>
</dbReference>
<accession>P67179</accession>
<accession>Q8XFD4</accession>
<proteinExistence type="inferred from homology"/>
<name>YEBC_SALTY</name>
<keyword id="KW-0963">Cytoplasm</keyword>
<keyword id="KW-0238">DNA-binding</keyword>
<keyword id="KW-1185">Reference proteome</keyword>
<keyword id="KW-0804">Transcription</keyword>
<keyword id="KW-0805">Transcription regulation</keyword>
<feature type="chain" id="PRO_0000175885" description="Probable transcriptional regulatory protein YebC">
    <location>
        <begin position="1"/>
        <end position="246"/>
    </location>
</feature>
<feature type="region of interest" description="Disordered" evidence="2">
    <location>
        <begin position="1"/>
        <end position="20"/>
    </location>
</feature>
<sequence>MAGHSKWANTRHRKAAQDAKRGKIFTKIIRELVTAAKLGGGDPDANPRLRAAVDKALANNMTRDTLNRAIARGVGGDEDSNMETIIYEGYGPGGTAIMIECLSDNRNRTVAEVRHAFSKCGGNLGTDGSVAYLFSKKGVISFEKGDEDTIMEAALEAGAEDVVTYDDGAIDVYTAWEEMGKVRDALEAAGLKADSAEVSMIPSTKADMDAETAPKLLRLIDMLEDCDDVQEVYHNGEISDEVAATL</sequence>
<comment type="subcellular location">
    <subcellularLocation>
        <location evidence="1">Cytoplasm</location>
    </subcellularLocation>
</comment>
<comment type="similarity">
    <text evidence="1">Belongs to the TACO1 family.</text>
</comment>
<protein>
    <recommendedName>
        <fullName evidence="1">Probable transcriptional regulatory protein YebC</fullName>
    </recommendedName>
</protein>
<organism>
    <name type="scientific">Salmonella typhimurium (strain LT2 / SGSC1412 / ATCC 700720)</name>
    <dbReference type="NCBI Taxonomy" id="99287"/>
    <lineage>
        <taxon>Bacteria</taxon>
        <taxon>Pseudomonadati</taxon>
        <taxon>Pseudomonadota</taxon>
        <taxon>Gammaproteobacteria</taxon>
        <taxon>Enterobacterales</taxon>
        <taxon>Enterobacteriaceae</taxon>
        <taxon>Salmonella</taxon>
    </lineage>
</organism>
<gene>
    <name evidence="1" type="primary">yebC</name>
    <name type="ordered locus">STM1899</name>
</gene>
<reference key="1">
    <citation type="journal article" date="2001" name="Nature">
        <title>Complete genome sequence of Salmonella enterica serovar Typhimurium LT2.</title>
        <authorList>
            <person name="McClelland M."/>
            <person name="Sanderson K.E."/>
            <person name="Spieth J."/>
            <person name="Clifton S.W."/>
            <person name="Latreille P."/>
            <person name="Courtney L."/>
            <person name="Porwollik S."/>
            <person name="Ali J."/>
            <person name="Dante M."/>
            <person name="Du F."/>
            <person name="Hou S."/>
            <person name="Layman D."/>
            <person name="Leonard S."/>
            <person name="Nguyen C."/>
            <person name="Scott K."/>
            <person name="Holmes A."/>
            <person name="Grewal N."/>
            <person name="Mulvaney E."/>
            <person name="Ryan E."/>
            <person name="Sun H."/>
            <person name="Florea L."/>
            <person name="Miller W."/>
            <person name="Stoneking T."/>
            <person name="Nhan M."/>
            <person name="Waterston R."/>
            <person name="Wilson R.K."/>
        </authorList>
    </citation>
    <scope>NUCLEOTIDE SEQUENCE [LARGE SCALE GENOMIC DNA]</scope>
    <source>
        <strain>LT2 / SGSC1412 / ATCC 700720</strain>
    </source>
</reference>